<comment type="function">
    <text evidence="3 4 5">Hydrolyase; part of the gene cluster that mediates the biosynthesis of a family of the mycotoxins cytochalasins E and K (PubMed:21983160). The hybrid PKS-NRPS synthetase ccsA and the enoyl reductase ccsC are responsible for fusion of phenylalanine with an octaketide backbone and subsequent release of the stable tetramic acid precursor (PubMed:21983160, PubMed:27551732). The polyketide synthase module (PKS) of the PKS-NRPS ccsA is responsible for the synthesis of the octaketide backbone (PubMed:21983160). The downstream nonribosomal peptide synthetase (NRPS) amidates the carboxyl end of the octaketide with a phenylalanine (PubMed:21983160). A reductase-like domain (R) at the C-terminus catalyzes the reductive release of the polyketide-amino acid intermediate (PubMed:21983160). Because ccsA lacks a designated enoylreductase (ER) domain, the required activity is provided the enoyl reductase ccsC (PubMed:21983160, PubMed:27551732). Upon formation of the 11-membered carbocycle-fused perhydroisoindolone intermediate, a number of oxidative steps are required to afford the final cytochalasin E and K, including two hydroxylations at C17 and C18, one alcohol oxidation at C17, one epoxidation at C6 and C7 and two Baeyer-Villiger oxidations (PubMed:21983160). The oxidative modification at C17, C18 and the C6-C7 epoxidation are likely to be catalyzed by the two cytochrome P450 oxygenases ccsD and ccsG (PubMed:21983160). CcsD may be responsible for the epoxidation of the C6-C7 double bond (PubMed:21983160). CcsG may be responsible for the successive oxidative modifications at C17 and C18 (PubMed:21983160). The double Baeyer-Villiger oxidations of ketocytochalasin to precytochalasin and cytochalasin Z(16) are among the final steps leading to cytochalasin E and K and are catalyzed by ccsB (PubMed:21983160, PubMed:24838010). The first oxygen insertion step follows that of the classic BVMO mechanism, generating the ester precytochalasin (PubMed:24838010). Release of precytochalasin into an aqueous environment can generate the shunt product iso-precytochalasin through spontaneous isomerization (PubMed:24838010). Alternatively, precytochalasin can undergo further oxidation by ccsB to yield the in-line carbonate-containing cytochalasin Z(16) (PubMed:24838010). Cytochalasin Z(16) is a precursor to cytochalasin E and cytochalasin K, whereas iso-precytochalasin is a precursor to cytochalasin Z(17) and rosellichalasin (PubMed:21983160, PubMed:24838010). The hydrolyase ccsE may catalyze hydrolysis of epoxide bond in cytochalasin E to afford cytochalasin K (PubMed:21983160). The function of ccsF has not been assigned but it may play a role in post-PKS-NRPS biosynthetic step, resistance or transport of cytochalasins and related PKS-NRPS products (PubMed:21983160).</text>
</comment>
<comment type="pathway">
    <text evidence="8">Mycotoxin biosynthesis.</text>
</comment>
<comment type="subunit">
    <text evidence="2">Homodimer.</text>
</comment>
<comment type="similarity">
    <text evidence="7">Belongs to the AB hydrolase superfamily. FUS2 hydrolase family.</text>
</comment>
<sequence length="436" mass="48566">MHKLFKNAPFFDFEAIRILGTTCYGGADVAEVFEAVDQIKNNDPETWETAWRIQAERAEKLAAEALEHGDRDAALAGYLRASNYTRASGYMYVSRAESSGEALVQDARALPIAEKVGELFRKAIPLMKGSVHTLGIPYEEYALPGYLYLPPPWRRIPGRKIPILVNSGGADSCQEELFYLNPAAGPGQGYAVVTFDGPGQGIMLRKYGLEMRPDWEAVTGRVIDFLEEYAAENPHLELDLNCIAVSGASMGGYYALRAAADQRVKACVSIDPFYDMWDFGTAHVSPIFIHAWTSGWISGGFVDNLMALLSRLSFQLRWEISVTGTFFGLSSPSQILLHMKKYTLRSTEEEPEGFLSRVICPVLLSGAGKSLYLDVDNHTRQCYDGLVNVAERNKQLWIPESEGQGSLQAKMGAFRLCNQRTYRFLDECFGIMRKSL</sequence>
<accession>A1CLZ0</accession>
<reference key="1">
    <citation type="journal article" date="2008" name="PLoS Genet.">
        <title>Genomic islands in the pathogenic filamentous fungus Aspergillus fumigatus.</title>
        <authorList>
            <person name="Fedorova N.D."/>
            <person name="Khaldi N."/>
            <person name="Joardar V.S."/>
            <person name="Maiti R."/>
            <person name="Amedeo P."/>
            <person name="Anderson M.J."/>
            <person name="Crabtree J."/>
            <person name="Silva J.C."/>
            <person name="Badger J.H."/>
            <person name="Albarraq A."/>
            <person name="Angiuoli S."/>
            <person name="Bussey H."/>
            <person name="Bowyer P."/>
            <person name="Cotty P.J."/>
            <person name="Dyer P.S."/>
            <person name="Egan A."/>
            <person name="Galens K."/>
            <person name="Fraser-Liggett C.M."/>
            <person name="Haas B.J."/>
            <person name="Inman J.M."/>
            <person name="Kent R."/>
            <person name="Lemieux S."/>
            <person name="Malavazi I."/>
            <person name="Orvis J."/>
            <person name="Roemer T."/>
            <person name="Ronning C.M."/>
            <person name="Sundaram J.P."/>
            <person name="Sutton G."/>
            <person name="Turner G."/>
            <person name="Venter J.C."/>
            <person name="White O.R."/>
            <person name="Whitty B.R."/>
            <person name="Youngman P."/>
            <person name="Wolfe K.H."/>
            <person name="Goldman G.H."/>
            <person name="Wortman J.R."/>
            <person name="Jiang B."/>
            <person name="Denning D.W."/>
            <person name="Nierman W.C."/>
        </authorList>
    </citation>
    <scope>NUCLEOTIDE SEQUENCE [LARGE SCALE GENOMIC DNA]</scope>
    <source>
        <strain>ATCC 1007 / CBS 513.65 / DSM 816 / NCTC 3887 / NRRL 1 / QM 1276 / 107</strain>
    </source>
</reference>
<reference key="2">
    <citation type="journal article" date="2011" name="Metab. Eng.">
        <title>Identification and engineering of the cytochalasin gene cluster from Aspergillus clavatus NRRL 1.</title>
        <authorList>
            <person name="Qiao K."/>
            <person name="Chooi Y.H."/>
            <person name="Tang Y."/>
        </authorList>
    </citation>
    <scope>FUNCTION</scope>
    <scope>PATHWAY</scope>
    <source>
        <strain>ATCC 1007 / CBS 513.65 / DSM 816 / NCTC 3887 / NRRL 1</strain>
    </source>
</reference>
<reference key="3">
    <citation type="journal article" date="2014" name="Nat. Chem. Biol.">
        <title>A carbonate-forming Baeyer-Villiger monooxygenase.</title>
        <authorList>
            <person name="Hu Y."/>
            <person name="Dietrich D."/>
            <person name="Xu W."/>
            <person name="Patel A."/>
            <person name="Thuss J.A."/>
            <person name="Wang J."/>
            <person name="Yin W.B."/>
            <person name="Qiao K."/>
            <person name="Houk K.N."/>
            <person name="Vederas J.C."/>
            <person name="Tang Y."/>
        </authorList>
    </citation>
    <scope>FUNCTION</scope>
    <source>
        <strain>ATCC 1007 / CBS 513.65 / DSM 816 / NCTC 3887 / NRRL 1</strain>
    </source>
</reference>
<reference key="4">
    <citation type="journal article" date="2016" name="PLoS ONE">
        <title>Linker flexibility facilitates module exchange in fungal hybrid PKS-NRPS engineering.</title>
        <authorList>
            <person name="Nielsen M.L."/>
            <person name="Isbrandt T."/>
            <person name="Petersen L.M."/>
            <person name="Mortensen U.H."/>
            <person name="Andersen M.R."/>
            <person name="Hoof J.B."/>
            <person name="Larsen T.O."/>
        </authorList>
    </citation>
    <scope>FUNCTION</scope>
</reference>
<keyword id="KW-0378">Hydrolase</keyword>
<keyword id="KW-1185">Reference proteome</keyword>
<feature type="chain" id="PRO_0000438563" description="Hydrolyase ccsE">
    <location>
        <begin position="1"/>
        <end position="436"/>
    </location>
</feature>
<feature type="active site" description="Nucleophile" evidence="1">
    <location>
        <position position="249"/>
    </location>
</feature>
<proteinExistence type="inferred from homology"/>
<protein>
    <recommendedName>
        <fullName evidence="6">Hydrolyase ccsE</fullName>
        <ecNumber evidence="8">3.7.1.-</ecNumber>
    </recommendedName>
    <alternativeName>
        <fullName evidence="6">Cytochalasin biosynthesis protein E</fullName>
    </alternativeName>
</protein>
<gene>
    <name evidence="6" type="primary">ccsE</name>
    <name type="ORF">ACLA_078680</name>
</gene>
<name>CCSE_ASPCL</name>
<dbReference type="EC" id="3.7.1.-" evidence="8"/>
<dbReference type="EMBL" id="DS027057">
    <property type="protein sequence ID" value="EAW09119.1"/>
    <property type="molecule type" value="Genomic_DNA"/>
</dbReference>
<dbReference type="RefSeq" id="XP_001270545.1">
    <property type="nucleotide sequence ID" value="XM_001270544.1"/>
</dbReference>
<dbReference type="SMR" id="A1CLZ0"/>
<dbReference type="STRING" id="344612.A1CLZ0"/>
<dbReference type="ESTHER" id="aspcl-CCSE">
    <property type="family name" value="Duf_1100-S"/>
</dbReference>
<dbReference type="EnsemblFungi" id="EAW09119">
    <property type="protein sequence ID" value="EAW09119"/>
    <property type="gene ID" value="ACLA_078680"/>
</dbReference>
<dbReference type="GeneID" id="4702551"/>
<dbReference type="KEGG" id="act:ACLA_078680"/>
<dbReference type="VEuPathDB" id="FungiDB:ACLA_078680"/>
<dbReference type="eggNOG" id="ENOG502QPTG">
    <property type="taxonomic scope" value="Eukaryota"/>
</dbReference>
<dbReference type="HOGENOM" id="CLU_034451_0_0_1"/>
<dbReference type="OMA" id="FQMRWEV"/>
<dbReference type="OrthoDB" id="249703at2759"/>
<dbReference type="Proteomes" id="UP000006701">
    <property type="component" value="Unassembled WGS sequence"/>
</dbReference>
<dbReference type="GO" id="GO:0016787">
    <property type="term" value="F:hydrolase activity"/>
    <property type="evidence" value="ECO:0007669"/>
    <property type="project" value="UniProtKB-KW"/>
</dbReference>
<dbReference type="Gene3D" id="1.20.1440.110">
    <property type="entry name" value="acylaminoacyl peptidase"/>
    <property type="match status" value="1"/>
</dbReference>
<dbReference type="Gene3D" id="3.40.50.1820">
    <property type="entry name" value="alpha/beta hydrolase"/>
    <property type="match status" value="1"/>
</dbReference>
<dbReference type="InterPro" id="IPR000073">
    <property type="entry name" value="AB_hydrolase_1"/>
</dbReference>
<dbReference type="InterPro" id="IPR029058">
    <property type="entry name" value="AB_hydrolase_fold"/>
</dbReference>
<dbReference type="InterPro" id="IPR050261">
    <property type="entry name" value="FrsA_esterase"/>
</dbReference>
<dbReference type="PANTHER" id="PTHR22946:SF13">
    <property type="entry name" value="ALPHA_BETA HYDROLASE PSOB"/>
    <property type="match status" value="1"/>
</dbReference>
<dbReference type="PANTHER" id="PTHR22946">
    <property type="entry name" value="DIENELACTONE HYDROLASE DOMAIN-CONTAINING PROTEIN-RELATED"/>
    <property type="match status" value="1"/>
</dbReference>
<dbReference type="Pfam" id="PF12697">
    <property type="entry name" value="Abhydrolase_6"/>
    <property type="match status" value="1"/>
</dbReference>
<dbReference type="SUPFAM" id="SSF53474">
    <property type="entry name" value="alpha/beta-Hydrolases"/>
    <property type="match status" value="1"/>
</dbReference>
<organism>
    <name type="scientific">Aspergillus clavatus (strain ATCC 1007 / CBS 513.65 / DSM 816 / NCTC 3887 / NRRL 1 / QM 1276 / 107)</name>
    <dbReference type="NCBI Taxonomy" id="344612"/>
    <lineage>
        <taxon>Eukaryota</taxon>
        <taxon>Fungi</taxon>
        <taxon>Dikarya</taxon>
        <taxon>Ascomycota</taxon>
        <taxon>Pezizomycotina</taxon>
        <taxon>Eurotiomycetes</taxon>
        <taxon>Eurotiomycetidae</taxon>
        <taxon>Eurotiales</taxon>
        <taxon>Aspergillaceae</taxon>
        <taxon>Aspergillus</taxon>
        <taxon>Aspergillus subgen. Fumigati</taxon>
    </lineage>
</organism>
<evidence type="ECO:0000250" key="1">
    <source>
        <dbReference type="UniProtKB" id="Q4WZB3"/>
    </source>
</evidence>
<evidence type="ECO:0000250" key="2">
    <source>
        <dbReference type="UniProtKB" id="Q93NG6"/>
    </source>
</evidence>
<evidence type="ECO:0000269" key="3">
    <source>
    </source>
</evidence>
<evidence type="ECO:0000269" key="4">
    <source>
    </source>
</evidence>
<evidence type="ECO:0000269" key="5">
    <source>
    </source>
</evidence>
<evidence type="ECO:0000303" key="6">
    <source>
    </source>
</evidence>
<evidence type="ECO:0000305" key="7"/>
<evidence type="ECO:0000305" key="8">
    <source>
    </source>
</evidence>